<feature type="signal peptide" evidence="2">
    <location>
        <begin position="1"/>
        <end position="21"/>
    </location>
</feature>
<feature type="chain" id="PRO_5013983452" description="Class I hydrophobin POH2">
    <location>
        <begin position="22"/>
        <end position="131"/>
    </location>
</feature>
<feature type="glycosylation site" description="N-linked (GlcNAc...) asparagine" evidence="3">
    <location>
        <position position="115"/>
    </location>
</feature>
<feature type="glycosylation site" description="N-linked (GlcNAc...) asparagine" evidence="3">
    <location>
        <position position="128"/>
    </location>
</feature>
<feature type="disulfide bond" evidence="1">
    <location>
        <begin position="50"/>
        <end position="110"/>
    </location>
</feature>
<feature type="disulfide bond" evidence="1">
    <location>
        <begin position="57"/>
        <end position="104"/>
    </location>
</feature>
<feature type="disulfide bond" evidence="1">
    <location>
        <begin position="58"/>
        <end position="91"/>
    </location>
</feature>
<feature type="disulfide bond" evidence="1">
    <location>
        <begin position="111"/>
        <end position="124"/>
    </location>
</feature>
<accession>O13503</accession>
<sequence>MFFRTSSLFTTIVAFTVMAAAMPGNPKPTTTTVTVTAPAHPTATAPASECKTGPVQCCNSVQSSKSPAASLLLGLLGIVLQGVAVPVGLTCNPITVIGVGGNSCSAQTVCCENNNFSGLIAIGCTPINLSL</sequence>
<organism>
    <name type="scientific">Pleurotus ostreatus</name>
    <name type="common">Oyster mushroom</name>
    <name type="synonym">White-rot fungus</name>
    <dbReference type="NCBI Taxonomy" id="5322"/>
    <lineage>
        <taxon>Eukaryota</taxon>
        <taxon>Fungi</taxon>
        <taxon>Dikarya</taxon>
        <taxon>Basidiomycota</taxon>
        <taxon>Agaricomycotina</taxon>
        <taxon>Agaricomycetes</taxon>
        <taxon>Agaricomycetidae</taxon>
        <taxon>Agaricales</taxon>
        <taxon>Pleurotineae</taxon>
        <taxon>Pleurotaceae</taxon>
        <taxon>Pleurotus</taxon>
    </lineage>
</organism>
<protein>
    <recommendedName>
        <fullName evidence="6">Class I hydrophobin POH2</fullName>
    </recommendedName>
</protein>
<dbReference type="EMBL" id="AJ225061">
    <property type="protein sequence ID" value="CAA12392.1"/>
    <property type="molecule type" value="Genomic_DNA"/>
</dbReference>
<dbReference type="EMBL" id="Y14657">
    <property type="protein sequence ID" value="CAA74987.1"/>
    <property type="molecule type" value="mRNA"/>
</dbReference>
<dbReference type="SMR" id="O13503"/>
<dbReference type="VEuPathDB" id="FungiDB:PC9H_010411"/>
<dbReference type="VEuPathDB" id="FungiDB:PLEOSDRAFT_31875"/>
<dbReference type="GO" id="GO:0005576">
    <property type="term" value="C:extracellular region"/>
    <property type="evidence" value="ECO:0007669"/>
    <property type="project" value="UniProtKB-KW"/>
</dbReference>
<dbReference type="GO" id="GO:0009277">
    <property type="term" value="C:fungal-type cell wall"/>
    <property type="evidence" value="ECO:0007669"/>
    <property type="project" value="InterPro"/>
</dbReference>
<dbReference type="GO" id="GO:0005199">
    <property type="term" value="F:structural constituent of cell wall"/>
    <property type="evidence" value="ECO:0007669"/>
    <property type="project" value="InterPro"/>
</dbReference>
<dbReference type="CDD" id="cd23507">
    <property type="entry name" value="hydrophobin_I"/>
    <property type="match status" value="1"/>
</dbReference>
<dbReference type="InterPro" id="IPR001338">
    <property type="entry name" value="Hydrophobin"/>
</dbReference>
<dbReference type="InterPro" id="IPR019778">
    <property type="entry name" value="Hydrophobin_CS"/>
</dbReference>
<dbReference type="Pfam" id="PF01185">
    <property type="entry name" value="Hydrophobin"/>
    <property type="match status" value="1"/>
</dbReference>
<dbReference type="SMART" id="SM00075">
    <property type="entry name" value="HYDRO"/>
    <property type="match status" value="1"/>
</dbReference>
<dbReference type="PROSITE" id="PS00956">
    <property type="entry name" value="HYDROPHOBIN"/>
    <property type="match status" value="1"/>
</dbReference>
<proteinExistence type="evidence at protein level"/>
<gene>
    <name evidence="6" type="primary">POH2</name>
</gene>
<evidence type="ECO:0000250" key="1">
    <source>
        <dbReference type="UniProtKB" id="Q04571"/>
    </source>
</evidence>
<evidence type="ECO:0000255" key="2"/>
<evidence type="ECO:0000255" key="3">
    <source>
        <dbReference type="PROSITE-ProRule" id="PRU00498"/>
    </source>
</evidence>
<evidence type="ECO:0000269" key="4">
    <source>
    </source>
</evidence>
<evidence type="ECO:0000269" key="5">
    <source>
    </source>
</evidence>
<evidence type="ECO:0000303" key="6">
    <source>
    </source>
</evidence>
<evidence type="ECO:0000305" key="7"/>
<name>POH2_PLEOS</name>
<comment type="function">
    <text evidence="5 7">Aerial growth, conidiation, and dispersal of filamentous fungi in the environment rely upon a capability of their secreting small amphipathic proteins called hydrophobins (HPBs) with low sequence identity. Class I can self-assemble into an outermost layer of rodlet bundles on aerial cell surfaces, conferring cellular hydrophobicity that supports fungal growth, development and dispersal; whereas Class II form highly ordered films at water-air interfaces through intermolecular interactions but contribute nothing to the rodlet structure (Probable). POH2 is a class I hydrophobin that causes a large drop in the water-surface tension, enabling hyphae to breach the interface and grow into the air, in both the primary and the secondary mycelium. In the latter mycelium POH2 maight also play a role in the emergence of fruiting bodies (PubMed:9846731). Secreted POH2 could also play a role in facilitating lignin degradation (PubMed:9846731).</text>
</comment>
<comment type="subunit">
    <text evidence="5">Self-assembles to form functional amyloid fibrils called rodlets. Self-assembly into fibrillar rodlets occurs spontaneously at hydrophobic:hydrophilic interfaces and the rodlets further associate laterally to form amphipathic monolayers.</text>
</comment>
<comment type="subcellular location">
    <subcellularLocation>
        <location evidence="5">Secreted</location>
    </subcellularLocation>
    <subcellularLocation>
        <location evidence="5">Secreted</location>
        <location evidence="5">Cell wall</location>
    </subcellularLocation>
</comment>
<comment type="tissue specificity">
    <text evidence="4 5">Expressionn is switched off in the fruiting bodies but abundantly expressed in the vegetative mycelium of both monokaryon and dikaryon.</text>
</comment>
<comment type="similarity">
    <text evidence="7">Belongs to the fungal hydrophobin family.</text>
</comment>
<reference key="1">
    <citation type="journal article" date="1998" name="Microbiology">
        <title>Identification of three differentially expressed hydrophobins in Pleurotus ostreatus (oyster mushroom).</title>
        <authorList>
            <person name="Asgeirsddttir S.A."/>
            <person name="de Vries O.M.H."/>
            <person name="Wessels J.G.H."/>
        </authorList>
    </citation>
    <scope>NUCLEOTIDE SEQUENCE [GENOMIC DNA]</scope>
    <scope>TISSUE SPECIFICITY</scope>
    <scope>SUBCELLULAR LOCATION</scope>
    <scope>SUBUNIT</scope>
    <scope>FUNCTION</scope>
    <source>
        <strain>R7</strain>
    </source>
</reference>
<reference key="2">
    <citation type="journal article" date="2021" name="Microbiol. Res.">
        <title>Identification of hydrophobin genes and their physiological functions related to growth and development in Pleurotus ostreatus.</title>
        <authorList>
            <person name="Xu D."/>
            <person name="Wang Y."/>
            <person name="Keerio A.A."/>
            <person name="Ma A."/>
        </authorList>
    </citation>
    <scope>TISSUE SPECIFICITY</scope>
</reference>
<keyword id="KW-0134">Cell wall</keyword>
<keyword id="KW-1015">Disulfide bond</keyword>
<keyword id="KW-0325">Glycoprotein</keyword>
<keyword id="KW-0964">Secreted</keyword>
<keyword id="KW-0732">Signal</keyword>